<comment type="similarity">
    <text evidence="2">Belongs to the ABC transporter superfamily.</text>
</comment>
<comment type="sequence caution" evidence="2">
    <conflict type="erroneous initiation">
        <sequence resource="EMBL-CDS" id="ADC50332"/>
    </conflict>
    <text>Extended N-terminus.</text>
</comment>
<dbReference type="EMBL" id="X59424">
    <property type="protein sequence ID" value="CAA42056.1"/>
    <property type="molecule type" value="Genomic_DNA"/>
</dbReference>
<dbReference type="EMBL" id="CP001878">
    <property type="protein sequence ID" value="ADC50332.1"/>
    <property type="status" value="ALT_INIT"/>
    <property type="molecule type" value="Genomic_DNA"/>
</dbReference>
<dbReference type="PIR" id="S15486">
    <property type="entry name" value="S15486"/>
</dbReference>
<dbReference type="RefSeq" id="WP_012957698.1">
    <property type="nucleotide sequence ID" value="NC_013791.2"/>
</dbReference>
<dbReference type="SMR" id="P26946"/>
<dbReference type="STRING" id="398511.BpOF4_11395"/>
<dbReference type="KEGG" id="bpf:BpOF4_11395"/>
<dbReference type="eggNOG" id="COG4152">
    <property type="taxonomic scope" value="Bacteria"/>
</dbReference>
<dbReference type="HOGENOM" id="CLU_000604_1_2_9"/>
<dbReference type="Proteomes" id="UP000001544">
    <property type="component" value="Chromosome"/>
</dbReference>
<dbReference type="GO" id="GO:0005524">
    <property type="term" value="F:ATP binding"/>
    <property type="evidence" value="ECO:0007669"/>
    <property type="project" value="UniProtKB-KW"/>
</dbReference>
<dbReference type="GO" id="GO:0016887">
    <property type="term" value="F:ATP hydrolysis activity"/>
    <property type="evidence" value="ECO:0007669"/>
    <property type="project" value="InterPro"/>
</dbReference>
<dbReference type="Gene3D" id="3.40.50.300">
    <property type="entry name" value="P-loop containing nucleotide triphosphate hydrolases"/>
    <property type="match status" value="1"/>
</dbReference>
<dbReference type="InterPro" id="IPR003439">
    <property type="entry name" value="ABC_transporter-like_ATP-bd"/>
</dbReference>
<dbReference type="InterPro" id="IPR017871">
    <property type="entry name" value="ABC_transporter-like_CS"/>
</dbReference>
<dbReference type="InterPro" id="IPR050763">
    <property type="entry name" value="ABC_transporter_ATP-binding"/>
</dbReference>
<dbReference type="InterPro" id="IPR025302">
    <property type="entry name" value="DrrA1-3-like_C"/>
</dbReference>
<dbReference type="InterPro" id="IPR027417">
    <property type="entry name" value="P-loop_NTPase"/>
</dbReference>
<dbReference type="PANTHER" id="PTHR42711">
    <property type="entry name" value="ABC TRANSPORTER ATP-BINDING PROTEIN"/>
    <property type="match status" value="1"/>
</dbReference>
<dbReference type="PANTHER" id="PTHR42711:SF5">
    <property type="entry name" value="ABC TRANSPORTER ATP-BINDING PROTEIN NATA"/>
    <property type="match status" value="1"/>
</dbReference>
<dbReference type="Pfam" id="PF00005">
    <property type="entry name" value="ABC_tran"/>
    <property type="match status" value="1"/>
</dbReference>
<dbReference type="Pfam" id="PF13732">
    <property type="entry name" value="DrrA1-3_C"/>
    <property type="match status" value="1"/>
</dbReference>
<dbReference type="SUPFAM" id="SSF52540">
    <property type="entry name" value="P-loop containing nucleoside triphosphate hydrolases"/>
    <property type="match status" value="1"/>
</dbReference>
<dbReference type="PROSITE" id="PS00211">
    <property type="entry name" value="ABC_TRANSPORTER_1"/>
    <property type="match status" value="1"/>
</dbReference>
<dbReference type="PROSITE" id="PS50893">
    <property type="entry name" value="ABC_TRANSPORTER_2"/>
    <property type="match status" value="1"/>
</dbReference>
<feature type="chain" id="PRO_0000093136" description="Uncharacterized ABC transporter ATP-binding protein BpOF4_11395">
    <location>
        <begin position="1"/>
        <end position="267"/>
    </location>
</feature>
<feature type="domain" description="ABC transporter" evidence="1">
    <location>
        <begin position="2"/>
        <end position="198"/>
    </location>
</feature>
<feature type="binding site" evidence="1">
    <location>
        <begin position="3"/>
        <end position="10"/>
    </location>
    <ligand>
        <name>ATP</name>
        <dbReference type="ChEBI" id="CHEBI:30616"/>
    </ligand>
</feature>
<feature type="sequence conflict" description="In Ref. 1; CAA42056." evidence="2" ref="1">
    <original>S</original>
    <variation>P</variation>
    <location>
        <position position="37"/>
    </location>
</feature>
<feature type="sequence conflict" description="In Ref. 1; CAA42056." evidence="2" ref="1">
    <original>F</original>
    <variation>L</variation>
    <location>
        <position position="247"/>
    </location>
</feature>
<gene>
    <name type="ordered locus">BpOF4_11395</name>
</gene>
<keyword id="KW-0067">ATP-binding</keyword>
<keyword id="KW-0547">Nucleotide-binding</keyword>
<keyword id="KW-1185">Reference proteome</keyword>
<keyword id="KW-0813">Transport</keyword>
<reference key="1">
    <citation type="submission" date="1991-05" db="EMBL/GenBank/DDBJ databases">
        <authorList>
            <person name="Ivey D.M."/>
            <person name="Krulwich T.A."/>
            <person name="Padan E."/>
        </authorList>
    </citation>
    <scope>NUCLEOTIDE SEQUENCE [GENOMIC DNA]</scope>
</reference>
<reference key="2">
    <citation type="journal article" date="2011" name="Environ. Microbiol.">
        <title>Genome of alkaliphilic Bacillus pseudofirmus OF4 reveals adaptations that support the ability to grow in an external pH range from 7.5 to 11.4.</title>
        <authorList>
            <person name="Janto B."/>
            <person name="Ahmed A."/>
            <person name="Ito M."/>
            <person name="Liu J."/>
            <person name="Hicks D.B."/>
            <person name="Pagni S."/>
            <person name="Fackelmayer O.J."/>
            <person name="Smith T.A."/>
            <person name="Earl J."/>
            <person name="Elbourne L.D."/>
            <person name="Hassan K."/>
            <person name="Paulsen I.T."/>
            <person name="Kolsto A.B."/>
            <person name="Tourasse N.J."/>
            <person name="Ehrlich G.D."/>
            <person name="Boissy R."/>
            <person name="Ivey D.M."/>
            <person name="Li G."/>
            <person name="Xue Y."/>
            <person name="Ma Y."/>
            <person name="Hu F.Z."/>
            <person name="Krulwich T.A."/>
        </authorList>
    </citation>
    <scope>NUCLEOTIDE SEQUENCE [LARGE SCALE GENOMIC DNA]</scope>
    <source>
        <strain>ATCC BAA-2126 / JCM 17055 / OF4</strain>
    </source>
</reference>
<protein>
    <recommendedName>
        <fullName>Uncharacterized ABC transporter ATP-binding protein BpOF4_11395</fullName>
    </recommendedName>
</protein>
<name>Y2279_ALKPO</name>
<organism>
    <name type="scientific">Alkalihalophilus pseudofirmus (strain ATCC BAA-2126 / JCM 17055 / OF4)</name>
    <name type="common">Bacillus pseudofirmus</name>
    <dbReference type="NCBI Taxonomy" id="398511"/>
    <lineage>
        <taxon>Bacteria</taxon>
        <taxon>Bacillati</taxon>
        <taxon>Bacillota</taxon>
        <taxon>Bacilli</taxon>
        <taxon>Bacillales</taxon>
        <taxon>Bacillaceae</taxon>
        <taxon>Alkalihalophilus</taxon>
    </lineage>
</organism>
<accession>P26946</accession>
<accession>D3FVD1</accession>
<proteinExistence type="inferred from homology"/>
<sequence>MLGANGAGKTTTFRMMLGLLEPTEGEMTWKGEKIDYSRTNVIGYLPEERGLYPKLKVRDQLIYLGRLKGMHKKDIIPEMRMWLERFKVTDYETKRIEELSKGNQQKIQFIASVIHRPELLILDEPFSGLDPVNAELLKEAVIDLKKKGTTIVFSSHRMDHVEELCQHLCILRHGTPVVKGELREIKRSFRNKFIVIEGERSFETLKNLPGVKKFQQKQGGVRLQVEDEEVAKVIFAEVAKSGYVRRFEVEEPSLQDIFIEKVGTAYA</sequence>
<evidence type="ECO:0000255" key="1">
    <source>
        <dbReference type="PROSITE-ProRule" id="PRU00434"/>
    </source>
</evidence>
<evidence type="ECO:0000305" key="2"/>